<name>ISPH_PROMA</name>
<proteinExistence type="inferred from homology"/>
<feature type="chain" id="PRO_0000128854" description="4-hydroxy-3-methylbut-2-enyl diphosphate reductase">
    <location>
        <begin position="1"/>
        <end position="405"/>
    </location>
</feature>
<feature type="active site" description="Proton donor" evidence="1">
    <location>
        <position position="187"/>
    </location>
</feature>
<feature type="binding site" evidence="1">
    <location>
        <position position="66"/>
    </location>
    <ligand>
        <name>[4Fe-4S] cluster</name>
        <dbReference type="ChEBI" id="CHEBI:49883"/>
    </ligand>
</feature>
<feature type="binding site" evidence="1">
    <location>
        <position position="96"/>
    </location>
    <ligand>
        <name>(2E)-4-hydroxy-3-methylbut-2-enyl diphosphate</name>
        <dbReference type="ChEBI" id="CHEBI:128753"/>
    </ligand>
</feature>
<feature type="binding site" evidence="1">
    <location>
        <position position="96"/>
    </location>
    <ligand>
        <name>dimethylallyl diphosphate</name>
        <dbReference type="ChEBI" id="CHEBI:57623"/>
    </ligand>
</feature>
<feature type="binding site" evidence="1">
    <location>
        <position position="96"/>
    </location>
    <ligand>
        <name>isopentenyl diphosphate</name>
        <dbReference type="ChEBI" id="CHEBI:128769"/>
    </ligand>
</feature>
<feature type="binding site" evidence="1">
    <location>
        <position position="157"/>
    </location>
    <ligand>
        <name>[4Fe-4S] cluster</name>
        <dbReference type="ChEBI" id="CHEBI:49883"/>
    </ligand>
</feature>
<feature type="binding site" evidence="1">
    <location>
        <position position="185"/>
    </location>
    <ligand>
        <name>(2E)-4-hydroxy-3-methylbut-2-enyl diphosphate</name>
        <dbReference type="ChEBI" id="CHEBI:128753"/>
    </ligand>
</feature>
<feature type="binding site" evidence="1">
    <location>
        <position position="185"/>
    </location>
    <ligand>
        <name>dimethylallyl diphosphate</name>
        <dbReference type="ChEBI" id="CHEBI:57623"/>
    </ligand>
</feature>
<feature type="binding site" evidence="1">
    <location>
        <position position="185"/>
    </location>
    <ligand>
        <name>isopentenyl diphosphate</name>
        <dbReference type="ChEBI" id="CHEBI:128769"/>
    </ligand>
</feature>
<feature type="binding site" evidence="1">
    <location>
        <position position="250"/>
    </location>
    <ligand>
        <name>(2E)-4-hydroxy-3-methylbut-2-enyl diphosphate</name>
        <dbReference type="ChEBI" id="CHEBI:128753"/>
    </ligand>
</feature>
<feature type="binding site" evidence="1">
    <location>
        <position position="288"/>
    </location>
    <ligand>
        <name>[4Fe-4S] cluster</name>
        <dbReference type="ChEBI" id="CHEBI:49883"/>
    </ligand>
</feature>
<feature type="binding site" evidence="1">
    <location>
        <position position="317"/>
    </location>
    <ligand>
        <name>(2E)-4-hydroxy-3-methylbut-2-enyl diphosphate</name>
        <dbReference type="ChEBI" id="CHEBI:128753"/>
    </ligand>
</feature>
<feature type="binding site" evidence="1">
    <location>
        <position position="317"/>
    </location>
    <ligand>
        <name>dimethylallyl diphosphate</name>
        <dbReference type="ChEBI" id="CHEBI:57623"/>
    </ligand>
</feature>
<feature type="binding site" evidence="1">
    <location>
        <position position="317"/>
    </location>
    <ligand>
        <name>isopentenyl diphosphate</name>
        <dbReference type="ChEBI" id="CHEBI:128769"/>
    </ligand>
</feature>
<feature type="binding site" evidence="1">
    <location>
        <position position="318"/>
    </location>
    <ligand>
        <name>(2E)-4-hydroxy-3-methylbut-2-enyl diphosphate</name>
        <dbReference type="ChEBI" id="CHEBI:128753"/>
    </ligand>
</feature>
<feature type="binding site" evidence="1">
    <location>
        <position position="318"/>
    </location>
    <ligand>
        <name>dimethylallyl diphosphate</name>
        <dbReference type="ChEBI" id="CHEBI:57623"/>
    </ligand>
</feature>
<feature type="binding site" evidence="1">
    <location>
        <position position="318"/>
    </location>
    <ligand>
        <name>isopentenyl diphosphate</name>
        <dbReference type="ChEBI" id="CHEBI:128769"/>
    </ligand>
</feature>
<feature type="binding site" evidence="1">
    <location>
        <position position="319"/>
    </location>
    <ligand>
        <name>(2E)-4-hydroxy-3-methylbut-2-enyl diphosphate</name>
        <dbReference type="ChEBI" id="CHEBI:128753"/>
    </ligand>
</feature>
<feature type="binding site" evidence="1">
    <location>
        <position position="319"/>
    </location>
    <ligand>
        <name>dimethylallyl diphosphate</name>
        <dbReference type="ChEBI" id="CHEBI:57623"/>
    </ligand>
</feature>
<feature type="binding site" evidence="1">
    <location>
        <position position="319"/>
    </location>
    <ligand>
        <name>isopentenyl diphosphate</name>
        <dbReference type="ChEBI" id="CHEBI:128769"/>
    </ligand>
</feature>
<feature type="binding site" evidence="1">
    <location>
        <position position="380"/>
    </location>
    <ligand>
        <name>(2E)-4-hydroxy-3-methylbut-2-enyl diphosphate</name>
        <dbReference type="ChEBI" id="CHEBI:128753"/>
    </ligand>
</feature>
<feature type="binding site" evidence="1">
    <location>
        <position position="380"/>
    </location>
    <ligand>
        <name>dimethylallyl diphosphate</name>
        <dbReference type="ChEBI" id="CHEBI:57623"/>
    </ligand>
</feature>
<feature type="binding site" evidence="1">
    <location>
        <position position="380"/>
    </location>
    <ligand>
        <name>isopentenyl diphosphate</name>
        <dbReference type="ChEBI" id="CHEBI:128769"/>
    </ligand>
</feature>
<protein>
    <recommendedName>
        <fullName evidence="1">4-hydroxy-3-methylbut-2-enyl diphosphate reductase</fullName>
        <shortName evidence="1">HMBPP reductase</shortName>
        <ecNumber evidence="1">1.17.7.4</ecNumber>
    </recommendedName>
</protein>
<evidence type="ECO:0000255" key="1">
    <source>
        <dbReference type="HAMAP-Rule" id="MF_00191"/>
    </source>
</evidence>
<organism>
    <name type="scientific">Prochlorococcus marinus (strain SARG / CCMP1375 / SS120)</name>
    <dbReference type="NCBI Taxonomy" id="167539"/>
    <lineage>
        <taxon>Bacteria</taxon>
        <taxon>Bacillati</taxon>
        <taxon>Cyanobacteriota</taxon>
        <taxon>Cyanophyceae</taxon>
        <taxon>Synechococcales</taxon>
        <taxon>Prochlorococcaceae</taxon>
        <taxon>Prochlorococcus</taxon>
    </lineage>
</organism>
<dbReference type="EC" id="1.17.7.4" evidence="1"/>
<dbReference type="EMBL" id="AE017126">
    <property type="protein sequence ID" value="AAP99342.1"/>
    <property type="molecule type" value="Genomic_DNA"/>
</dbReference>
<dbReference type="RefSeq" id="NP_874690.1">
    <property type="nucleotide sequence ID" value="NC_005042.1"/>
</dbReference>
<dbReference type="RefSeq" id="WP_011124451.1">
    <property type="nucleotide sequence ID" value="NC_005042.1"/>
</dbReference>
<dbReference type="SMR" id="Q7VDS2"/>
<dbReference type="STRING" id="167539.Pro_0296"/>
<dbReference type="EnsemblBacteria" id="AAP99342">
    <property type="protein sequence ID" value="AAP99342"/>
    <property type="gene ID" value="Pro_0296"/>
</dbReference>
<dbReference type="KEGG" id="pma:Pro_0296"/>
<dbReference type="PATRIC" id="fig|167539.5.peg.305"/>
<dbReference type="eggNOG" id="COG0761">
    <property type="taxonomic scope" value="Bacteria"/>
</dbReference>
<dbReference type="HOGENOM" id="CLU_027486_4_0_3"/>
<dbReference type="OrthoDB" id="9804077at2"/>
<dbReference type="UniPathway" id="UPA00056">
    <property type="reaction ID" value="UER00097"/>
</dbReference>
<dbReference type="UniPathway" id="UPA00059">
    <property type="reaction ID" value="UER00105"/>
</dbReference>
<dbReference type="Proteomes" id="UP000001420">
    <property type="component" value="Chromosome"/>
</dbReference>
<dbReference type="GO" id="GO:0051539">
    <property type="term" value="F:4 iron, 4 sulfur cluster binding"/>
    <property type="evidence" value="ECO:0007669"/>
    <property type="project" value="UniProtKB-UniRule"/>
</dbReference>
<dbReference type="GO" id="GO:0051745">
    <property type="term" value="F:4-hydroxy-3-methylbut-2-enyl diphosphate reductase activity"/>
    <property type="evidence" value="ECO:0007669"/>
    <property type="project" value="UniProtKB-UniRule"/>
</dbReference>
<dbReference type="GO" id="GO:0046872">
    <property type="term" value="F:metal ion binding"/>
    <property type="evidence" value="ECO:0007669"/>
    <property type="project" value="UniProtKB-KW"/>
</dbReference>
<dbReference type="GO" id="GO:0050992">
    <property type="term" value="P:dimethylallyl diphosphate biosynthetic process"/>
    <property type="evidence" value="ECO:0007669"/>
    <property type="project" value="UniProtKB-UniRule"/>
</dbReference>
<dbReference type="GO" id="GO:0019288">
    <property type="term" value="P:isopentenyl diphosphate biosynthetic process, methylerythritol 4-phosphate pathway"/>
    <property type="evidence" value="ECO:0007669"/>
    <property type="project" value="UniProtKB-UniRule"/>
</dbReference>
<dbReference type="GO" id="GO:0016114">
    <property type="term" value="P:terpenoid biosynthetic process"/>
    <property type="evidence" value="ECO:0007669"/>
    <property type="project" value="UniProtKB-UniRule"/>
</dbReference>
<dbReference type="CDD" id="cd13944">
    <property type="entry name" value="lytB_ispH"/>
    <property type="match status" value="1"/>
</dbReference>
<dbReference type="Gene3D" id="3.40.50.11270">
    <property type="match status" value="1"/>
</dbReference>
<dbReference type="Gene3D" id="3.40.1010.20">
    <property type="entry name" value="4-hydroxy-3-methylbut-2-enyl diphosphate reductase, catalytic domain"/>
    <property type="match status" value="2"/>
</dbReference>
<dbReference type="HAMAP" id="MF_00191">
    <property type="entry name" value="IspH"/>
    <property type="match status" value="1"/>
</dbReference>
<dbReference type="InterPro" id="IPR003451">
    <property type="entry name" value="LytB/IspH"/>
</dbReference>
<dbReference type="NCBIfam" id="TIGR00216">
    <property type="entry name" value="ispH_lytB"/>
    <property type="match status" value="1"/>
</dbReference>
<dbReference type="NCBIfam" id="NF009911">
    <property type="entry name" value="PRK13371.1"/>
    <property type="match status" value="1"/>
</dbReference>
<dbReference type="PANTHER" id="PTHR31619">
    <property type="entry name" value="4-HYDROXY-3-METHYLBUT-2-ENYL DIPHOSPHATE REDUCTASE, CHLOROPLASTIC"/>
    <property type="match status" value="1"/>
</dbReference>
<dbReference type="PANTHER" id="PTHR31619:SF5">
    <property type="entry name" value="4-HYDROXY-3-METHYLBUT-2-ENYL DIPHOSPHATE REDUCTASE, CHLOROPLASTIC"/>
    <property type="match status" value="1"/>
</dbReference>
<dbReference type="Pfam" id="PF02401">
    <property type="entry name" value="LYTB"/>
    <property type="match status" value="1"/>
</dbReference>
<reference key="1">
    <citation type="journal article" date="2003" name="Proc. Natl. Acad. Sci. U.S.A.">
        <title>Genome sequence of the cyanobacterium Prochlorococcus marinus SS120, a nearly minimal oxyphototrophic genome.</title>
        <authorList>
            <person name="Dufresne A."/>
            <person name="Salanoubat M."/>
            <person name="Partensky F."/>
            <person name="Artiguenave F."/>
            <person name="Axmann I.M."/>
            <person name="Barbe V."/>
            <person name="Duprat S."/>
            <person name="Galperin M.Y."/>
            <person name="Koonin E.V."/>
            <person name="Le Gall F."/>
            <person name="Makarova K.S."/>
            <person name="Ostrowski M."/>
            <person name="Oztas S."/>
            <person name="Robert C."/>
            <person name="Rogozin I.B."/>
            <person name="Scanlan D.J."/>
            <person name="Tandeau de Marsac N."/>
            <person name="Weissenbach J."/>
            <person name="Wincker P."/>
            <person name="Wolf Y.I."/>
            <person name="Hess W.R."/>
        </authorList>
    </citation>
    <scope>NUCLEOTIDE SEQUENCE [LARGE SCALE GENOMIC DNA]</scope>
    <source>
        <strain>SARG / CCMP1375 / SS120</strain>
    </source>
</reference>
<keyword id="KW-0004">4Fe-4S</keyword>
<keyword id="KW-0408">Iron</keyword>
<keyword id="KW-0411">Iron-sulfur</keyword>
<keyword id="KW-0414">Isoprene biosynthesis</keyword>
<keyword id="KW-0479">Metal-binding</keyword>
<keyword id="KW-0560">Oxidoreductase</keyword>
<keyword id="KW-1185">Reference proteome</keyword>
<gene>
    <name evidence="1" type="primary">ispH</name>
    <name type="synonym">lytB</name>
    <name type="ordered locus">Pro_0296</name>
</gene>
<comment type="function">
    <text evidence="1">Catalyzes the conversion of 1-hydroxy-2-methyl-2-(E)-butenyl 4-diphosphate (HMBPP) into a mixture of isopentenyl diphosphate (IPP) and dimethylallyl diphosphate (DMAPP). Acts in the terminal step of the DOXP/MEP pathway for isoprenoid precursor biosynthesis.</text>
</comment>
<comment type="catalytic activity">
    <reaction evidence="1">
        <text>isopentenyl diphosphate + 2 oxidized [2Fe-2S]-[ferredoxin] + H2O = (2E)-4-hydroxy-3-methylbut-2-enyl diphosphate + 2 reduced [2Fe-2S]-[ferredoxin] + 2 H(+)</text>
        <dbReference type="Rhea" id="RHEA:24488"/>
        <dbReference type="Rhea" id="RHEA-COMP:10000"/>
        <dbReference type="Rhea" id="RHEA-COMP:10001"/>
        <dbReference type="ChEBI" id="CHEBI:15377"/>
        <dbReference type="ChEBI" id="CHEBI:15378"/>
        <dbReference type="ChEBI" id="CHEBI:33737"/>
        <dbReference type="ChEBI" id="CHEBI:33738"/>
        <dbReference type="ChEBI" id="CHEBI:128753"/>
        <dbReference type="ChEBI" id="CHEBI:128769"/>
        <dbReference type="EC" id="1.17.7.4"/>
    </reaction>
</comment>
<comment type="catalytic activity">
    <reaction evidence="1">
        <text>dimethylallyl diphosphate + 2 oxidized [2Fe-2S]-[ferredoxin] + H2O = (2E)-4-hydroxy-3-methylbut-2-enyl diphosphate + 2 reduced [2Fe-2S]-[ferredoxin] + 2 H(+)</text>
        <dbReference type="Rhea" id="RHEA:24825"/>
        <dbReference type="Rhea" id="RHEA-COMP:10000"/>
        <dbReference type="Rhea" id="RHEA-COMP:10001"/>
        <dbReference type="ChEBI" id="CHEBI:15377"/>
        <dbReference type="ChEBI" id="CHEBI:15378"/>
        <dbReference type="ChEBI" id="CHEBI:33737"/>
        <dbReference type="ChEBI" id="CHEBI:33738"/>
        <dbReference type="ChEBI" id="CHEBI:57623"/>
        <dbReference type="ChEBI" id="CHEBI:128753"/>
        <dbReference type="EC" id="1.17.7.4"/>
    </reaction>
</comment>
<comment type="cofactor">
    <cofactor evidence="1">
        <name>[4Fe-4S] cluster</name>
        <dbReference type="ChEBI" id="CHEBI:49883"/>
    </cofactor>
    <text evidence="1">Binds 1 [4Fe-4S] cluster per subunit.</text>
</comment>
<comment type="pathway">
    <text evidence="1">Isoprenoid biosynthesis; dimethylallyl diphosphate biosynthesis; dimethylallyl diphosphate from (2E)-4-hydroxy-3-methylbutenyl diphosphate: step 1/1.</text>
</comment>
<comment type="pathway">
    <text evidence="1">Isoprenoid biosynthesis; isopentenyl diphosphate biosynthesis via DXP pathway; isopentenyl diphosphate from 1-deoxy-D-xylulose 5-phosphate: step 6/6.</text>
</comment>
<comment type="similarity">
    <text evidence="1">Belongs to the IspH family.</text>
</comment>
<accession>Q7VDS2</accession>
<sequence length="405" mass="46073">MDTQAFKRSLHHSDRYNRRGFESPAKRAQALEKAYQSNLIASIRDNGYLLEHGRLRVKLAEAFGFCWGVERAVAMAYETRRHYPTESIWITNEIIHNPSVNDHLRNMNVRFISAEKGIKDFSSVEEGDVVILPAFGATVHEMKLLHERGCHIIDTTCPWVSKVWHTVEKHKKHEFSSIIHGKVKHEETLATSSFAGTYLVVLDLKEAQYVSDYILGKGNRDDFLRRFSRASSQGFDPDRDLKRLGVANQTTMLKSETEEIGRLFEKTMLRKYGPAELNEHFLAFNTICDATEERQDAMFSLVDEPLDLLVVIGGFNSSNTTHLQEIALAKGIRSFHIDTPERIGEIENTITHKPLGDDLRVESNFLPEGKINVGITSGASTPDRIVEHVIQKLINLSERKLMTEN</sequence>